<reference key="1">
    <citation type="journal article" date="2007" name="Plant Biotechnol. J.">
        <title>The complete nucleotide sequence of the coffee (Coffea arabica L.) chloroplast genome: organization and implications for biotechnology and phylogenetic relationships amongst angiosperms.</title>
        <authorList>
            <person name="Samson N."/>
            <person name="Bausher M.G."/>
            <person name="Lee S.-B."/>
            <person name="Jansen R.K."/>
            <person name="Daniell H."/>
        </authorList>
    </citation>
    <scope>NUCLEOTIDE SEQUENCE [LARGE SCALE GENOMIC DNA]</scope>
</reference>
<protein>
    <recommendedName>
        <fullName evidence="1">Large ribosomal subunit protein bL32c</fullName>
    </recommendedName>
    <alternativeName>
        <fullName evidence="2">50S ribosomal protein L32, chloroplastic</fullName>
    </alternativeName>
</protein>
<gene>
    <name evidence="1" type="primary">rpl32</name>
</gene>
<proteinExistence type="inferred from homology"/>
<dbReference type="EMBL" id="EF044213">
    <property type="protein sequence ID" value="ABJ89727.1"/>
    <property type="molecule type" value="Genomic_DNA"/>
</dbReference>
<dbReference type="RefSeq" id="YP_817530.1">
    <property type="nucleotide sequence ID" value="NC_008535.1"/>
</dbReference>
<dbReference type="SMR" id="A0A383"/>
<dbReference type="GeneID" id="4421848"/>
<dbReference type="OrthoDB" id="1718206at2759"/>
<dbReference type="Proteomes" id="UP000515148">
    <property type="component" value="Chloroplast Pltd"/>
</dbReference>
<dbReference type="GO" id="GO:0009507">
    <property type="term" value="C:chloroplast"/>
    <property type="evidence" value="ECO:0007669"/>
    <property type="project" value="UniProtKB-SubCell"/>
</dbReference>
<dbReference type="GO" id="GO:0015934">
    <property type="term" value="C:large ribosomal subunit"/>
    <property type="evidence" value="ECO:0007669"/>
    <property type="project" value="InterPro"/>
</dbReference>
<dbReference type="GO" id="GO:0003735">
    <property type="term" value="F:structural constituent of ribosome"/>
    <property type="evidence" value="ECO:0007669"/>
    <property type="project" value="InterPro"/>
</dbReference>
<dbReference type="GO" id="GO:0006412">
    <property type="term" value="P:translation"/>
    <property type="evidence" value="ECO:0007669"/>
    <property type="project" value="UniProtKB-UniRule"/>
</dbReference>
<dbReference type="HAMAP" id="MF_00340">
    <property type="entry name" value="Ribosomal_bL32"/>
    <property type="match status" value="1"/>
</dbReference>
<dbReference type="InterPro" id="IPR002677">
    <property type="entry name" value="Ribosomal_bL32"/>
</dbReference>
<dbReference type="InterPro" id="IPR044958">
    <property type="entry name" value="Ribosomal_bL32_plant/cyanobact"/>
</dbReference>
<dbReference type="InterPro" id="IPR011332">
    <property type="entry name" value="Ribosomal_zn-bd"/>
</dbReference>
<dbReference type="PANTHER" id="PTHR36083">
    <property type="entry name" value="50S RIBOSOMAL PROTEIN L32, CHLOROPLASTIC"/>
    <property type="match status" value="1"/>
</dbReference>
<dbReference type="PANTHER" id="PTHR36083:SF1">
    <property type="entry name" value="LARGE RIBOSOMAL SUBUNIT PROTEIN BL32C"/>
    <property type="match status" value="1"/>
</dbReference>
<dbReference type="Pfam" id="PF01783">
    <property type="entry name" value="Ribosomal_L32p"/>
    <property type="match status" value="1"/>
</dbReference>
<dbReference type="SUPFAM" id="SSF57829">
    <property type="entry name" value="Zn-binding ribosomal proteins"/>
    <property type="match status" value="1"/>
</dbReference>
<geneLocation type="chloroplast"/>
<organism>
    <name type="scientific">Coffea arabica</name>
    <name type="common">Arabian coffee</name>
    <dbReference type="NCBI Taxonomy" id="13443"/>
    <lineage>
        <taxon>Eukaryota</taxon>
        <taxon>Viridiplantae</taxon>
        <taxon>Streptophyta</taxon>
        <taxon>Embryophyta</taxon>
        <taxon>Tracheophyta</taxon>
        <taxon>Spermatophyta</taxon>
        <taxon>Magnoliopsida</taxon>
        <taxon>eudicotyledons</taxon>
        <taxon>Gunneridae</taxon>
        <taxon>Pentapetalae</taxon>
        <taxon>asterids</taxon>
        <taxon>lamiids</taxon>
        <taxon>Gentianales</taxon>
        <taxon>Rubiaceae</taxon>
        <taxon>Ixoroideae</taxon>
        <taxon>Gardenieae complex</taxon>
        <taxon>Bertiereae - Coffeeae clade</taxon>
        <taxon>Coffeeae</taxon>
        <taxon>Coffea</taxon>
    </lineage>
</organism>
<accession>A0A383</accession>
<name>RK32_COFAR</name>
<keyword id="KW-0150">Chloroplast</keyword>
<keyword id="KW-0934">Plastid</keyword>
<keyword id="KW-1185">Reference proteome</keyword>
<keyword id="KW-0687">Ribonucleoprotein</keyword>
<keyword id="KW-0689">Ribosomal protein</keyword>
<feature type="chain" id="PRO_0000276464" description="Large ribosomal subunit protein bL32c">
    <location>
        <begin position="1"/>
        <end position="53"/>
    </location>
</feature>
<evidence type="ECO:0000255" key="1">
    <source>
        <dbReference type="HAMAP-Rule" id="MF_00340"/>
    </source>
</evidence>
<evidence type="ECO:0000305" key="2"/>
<comment type="subcellular location">
    <subcellularLocation>
        <location>Plastid</location>
        <location>Chloroplast</location>
    </subcellularLocation>
</comment>
<comment type="similarity">
    <text evidence="1">Belongs to the bacterial ribosomal protein bL32 family.</text>
</comment>
<sequence length="53" mass="6092">MAVPKKRTSTSKKRIRKNIWKKKGYWTALKAFSLGKSLSTGNSKSFFVQQTNK</sequence>